<comment type="subcellular location">
    <subcellularLocation>
        <location evidence="2">Cell membrane</location>
        <topology evidence="2">Multi-pass membrane protein</topology>
    </subcellularLocation>
</comment>
<comment type="similarity">
    <text evidence="2">Belongs to the bacteriophage holin family. Cp-1 holin subfamily.</text>
</comment>
<proteinExistence type="inferred from homology"/>
<gene>
    <name type="ordered locus">lmo0128</name>
</gene>
<reference key="1">
    <citation type="journal article" date="2001" name="Science">
        <title>Comparative genomics of Listeria species.</title>
        <authorList>
            <person name="Glaser P."/>
            <person name="Frangeul L."/>
            <person name="Buchrieser C."/>
            <person name="Rusniok C."/>
            <person name="Amend A."/>
            <person name="Baquero F."/>
            <person name="Berche P."/>
            <person name="Bloecker H."/>
            <person name="Brandt P."/>
            <person name="Chakraborty T."/>
            <person name="Charbit A."/>
            <person name="Chetouani F."/>
            <person name="Couve E."/>
            <person name="de Daruvar A."/>
            <person name="Dehoux P."/>
            <person name="Domann E."/>
            <person name="Dominguez-Bernal G."/>
            <person name="Duchaud E."/>
            <person name="Durant L."/>
            <person name="Dussurget O."/>
            <person name="Entian K.-D."/>
            <person name="Fsihi H."/>
            <person name="Garcia-del Portillo F."/>
            <person name="Garrido P."/>
            <person name="Gautier L."/>
            <person name="Goebel W."/>
            <person name="Gomez-Lopez N."/>
            <person name="Hain T."/>
            <person name="Hauf J."/>
            <person name="Jackson D."/>
            <person name="Jones L.-M."/>
            <person name="Kaerst U."/>
            <person name="Kreft J."/>
            <person name="Kuhn M."/>
            <person name="Kunst F."/>
            <person name="Kurapkat G."/>
            <person name="Madueno E."/>
            <person name="Maitournam A."/>
            <person name="Mata Vicente J."/>
            <person name="Ng E."/>
            <person name="Nedjari H."/>
            <person name="Nordsiek G."/>
            <person name="Novella S."/>
            <person name="de Pablos B."/>
            <person name="Perez-Diaz J.-C."/>
            <person name="Purcell R."/>
            <person name="Remmel B."/>
            <person name="Rose M."/>
            <person name="Schlueter T."/>
            <person name="Simoes N."/>
            <person name="Tierrez A."/>
            <person name="Vazquez-Boland J.-A."/>
            <person name="Voss H."/>
            <person name="Wehland J."/>
            <person name="Cossart P."/>
        </authorList>
    </citation>
    <scope>NUCLEOTIDE SEQUENCE [LARGE SCALE GENOMIC DNA]</scope>
    <source>
        <strain>ATCC BAA-679 / EGD-e</strain>
    </source>
</reference>
<protein>
    <recommendedName>
        <fullName>Uncharacterized protein Lmo0128</fullName>
    </recommendedName>
</protein>
<name>Y128_LISMO</name>
<keyword id="KW-1003">Cell membrane</keyword>
<keyword id="KW-0472">Membrane</keyword>
<keyword id="KW-1185">Reference proteome</keyword>
<keyword id="KW-0812">Transmembrane</keyword>
<keyword id="KW-1133">Transmembrane helix</keyword>
<dbReference type="EMBL" id="AL591973">
    <property type="protein sequence ID" value="CAC98343.1"/>
    <property type="molecule type" value="Genomic_DNA"/>
</dbReference>
<dbReference type="PIR" id="AI1090">
    <property type="entry name" value="AI1090"/>
</dbReference>
<dbReference type="RefSeq" id="NP_463661.1">
    <property type="nucleotide sequence ID" value="NC_003210.1"/>
</dbReference>
<dbReference type="RefSeq" id="WP_003721755.1">
    <property type="nucleotide sequence ID" value="NZ_CP149495.1"/>
</dbReference>
<dbReference type="STRING" id="169963.gene:17592764"/>
<dbReference type="PaxDb" id="169963-lmo0128"/>
<dbReference type="EnsemblBacteria" id="CAC98343">
    <property type="protein sequence ID" value="CAC98343"/>
    <property type="gene ID" value="CAC98343"/>
</dbReference>
<dbReference type="GeneID" id="986706"/>
<dbReference type="KEGG" id="lmo:lmo0128"/>
<dbReference type="PATRIC" id="fig|169963.11.peg.131"/>
<dbReference type="eggNOG" id="COG4824">
    <property type="taxonomic scope" value="Bacteria"/>
</dbReference>
<dbReference type="HOGENOM" id="CLU_125939_3_2_9"/>
<dbReference type="OrthoDB" id="88184at2"/>
<dbReference type="PhylomeDB" id="P58702"/>
<dbReference type="BioCyc" id="LMON169963:LMO0128-MONOMER"/>
<dbReference type="Proteomes" id="UP000000817">
    <property type="component" value="Chromosome"/>
</dbReference>
<dbReference type="GO" id="GO:0005886">
    <property type="term" value="C:plasma membrane"/>
    <property type="evidence" value="ECO:0007669"/>
    <property type="project" value="UniProtKB-SubCell"/>
</dbReference>
<dbReference type="InterPro" id="IPR006480">
    <property type="entry name" value="Phage_holin_4_1"/>
</dbReference>
<dbReference type="NCBIfam" id="TIGR01593">
    <property type="entry name" value="holin_tox_secr"/>
    <property type="match status" value="1"/>
</dbReference>
<dbReference type="Pfam" id="PF05105">
    <property type="entry name" value="Phage_holin_4_1"/>
    <property type="match status" value="1"/>
</dbReference>
<organism>
    <name type="scientific">Listeria monocytogenes serovar 1/2a (strain ATCC BAA-679 / EGD-e)</name>
    <dbReference type="NCBI Taxonomy" id="169963"/>
    <lineage>
        <taxon>Bacteria</taxon>
        <taxon>Bacillati</taxon>
        <taxon>Bacillota</taxon>
        <taxon>Bacilli</taxon>
        <taxon>Bacillales</taxon>
        <taxon>Listeriaceae</taxon>
        <taxon>Listeria</taxon>
    </lineage>
</organism>
<feature type="chain" id="PRO_0000172866" description="Uncharacterized protein Lmo0128">
    <location>
        <begin position="1"/>
        <end position="140"/>
    </location>
</feature>
<feature type="transmembrane region" description="Helical" evidence="1">
    <location>
        <begin position="4"/>
        <end position="21"/>
    </location>
</feature>
<feature type="transmembrane region" description="Helical" evidence="1">
    <location>
        <begin position="26"/>
        <end position="48"/>
    </location>
</feature>
<sequence>MEVILKFGILGFGAIFGYLFGEVDLLVKVLVCFIVADYISGLLASGYLGELSSKMGFKGIAKKIAILILVAIAHQIDLILGTHNTTRDAVIFFYLANELISILENFVRMGMKVPEVLKNLILIFDAKSGEDEEKHDKDMD</sequence>
<evidence type="ECO:0000255" key="1"/>
<evidence type="ECO:0000305" key="2"/>
<accession>P58702</accession>